<dbReference type="EMBL" id="BA000034">
    <property type="protein sequence ID" value="BAC63147.1"/>
    <property type="molecule type" value="Genomic_DNA"/>
</dbReference>
<dbReference type="RefSeq" id="WP_000615920.1">
    <property type="nucleotide sequence ID" value="NC_004606.1"/>
</dbReference>
<dbReference type="SMR" id="P0DE05"/>
<dbReference type="GeneID" id="83689563"/>
<dbReference type="KEGG" id="sps:SPs0052"/>
<dbReference type="HOGENOM" id="CLU_095071_2_1_9"/>
<dbReference type="GO" id="GO:0022625">
    <property type="term" value="C:cytosolic large ribosomal subunit"/>
    <property type="evidence" value="ECO:0007669"/>
    <property type="project" value="TreeGrafter"/>
</dbReference>
<dbReference type="GO" id="GO:0070180">
    <property type="term" value="F:large ribosomal subunit rRNA binding"/>
    <property type="evidence" value="ECO:0007669"/>
    <property type="project" value="TreeGrafter"/>
</dbReference>
<dbReference type="GO" id="GO:0003735">
    <property type="term" value="F:structural constituent of ribosome"/>
    <property type="evidence" value="ECO:0007669"/>
    <property type="project" value="InterPro"/>
</dbReference>
<dbReference type="GO" id="GO:0006412">
    <property type="term" value="P:translation"/>
    <property type="evidence" value="ECO:0007669"/>
    <property type="project" value="UniProtKB-UniRule"/>
</dbReference>
<dbReference type="CDD" id="cd00337">
    <property type="entry name" value="Ribosomal_uL14"/>
    <property type="match status" value="1"/>
</dbReference>
<dbReference type="FunFam" id="2.40.150.20:FF:000001">
    <property type="entry name" value="50S ribosomal protein L14"/>
    <property type="match status" value="1"/>
</dbReference>
<dbReference type="Gene3D" id="2.40.150.20">
    <property type="entry name" value="Ribosomal protein L14"/>
    <property type="match status" value="1"/>
</dbReference>
<dbReference type="HAMAP" id="MF_01367">
    <property type="entry name" value="Ribosomal_uL14"/>
    <property type="match status" value="1"/>
</dbReference>
<dbReference type="InterPro" id="IPR000218">
    <property type="entry name" value="Ribosomal_uL14"/>
</dbReference>
<dbReference type="InterPro" id="IPR005745">
    <property type="entry name" value="Ribosomal_uL14_bac-type"/>
</dbReference>
<dbReference type="InterPro" id="IPR019972">
    <property type="entry name" value="Ribosomal_uL14_CS"/>
</dbReference>
<dbReference type="InterPro" id="IPR036853">
    <property type="entry name" value="Ribosomal_uL14_sf"/>
</dbReference>
<dbReference type="NCBIfam" id="TIGR01067">
    <property type="entry name" value="rplN_bact"/>
    <property type="match status" value="1"/>
</dbReference>
<dbReference type="PANTHER" id="PTHR11761">
    <property type="entry name" value="50S/60S RIBOSOMAL PROTEIN L14/L23"/>
    <property type="match status" value="1"/>
</dbReference>
<dbReference type="PANTHER" id="PTHR11761:SF3">
    <property type="entry name" value="LARGE RIBOSOMAL SUBUNIT PROTEIN UL14M"/>
    <property type="match status" value="1"/>
</dbReference>
<dbReference type="Pfam" id="PF00238">
    <property type="entry name" value="Ribosomal_L14"/>
    <property type="match status" value="1"/>
</dbReference>
<dbReference type="SMART" id="SM01374">
    <property type="entry name" value="Ribosomal_L14"/>
    <property type="match status" value="1"/>
</dbReference>
<dbReference type="SUPFAM" id="SSF50193">
    <property type="entry name" value="Ribosomal protein L14"/>
    <property type="match status" value="1"/>
</dbReference>
<dbReference type="PROSITE" id="PS00049">
    <property type="entry name" value="RIBOSOMAL_L14"/>
    <property type="match status" value="1"/>
</dbReference>
<proteinExistence type="inferred from homology"/>
<name>RL14_STRPQ</name>
<feature type="chain" id="PRO_0000411492" description="Large ribosomal subunit protein uL14">
    <location>
        <begin position="1"/>
        <end position="122"/>
    </location>
</feature>
<comment type="function">
    <text evidence="1">Binds to 23S rRNA. Forms part of two intersubunit bridges in the 70S ribosome.</text>
</comment>
<comment type="subunit">
    <text evidence="1">Part of the 50S ribosomal subunit. Forms a cluster with proteins L3 and L19. In the 70S ribosome, L14 and L19 interact and together make contacts with the 16S rRNA in bridges B5 and B8.</text>
</comment>
<comment type="similarity">
    <text evidence="1">Belongs to the universal ribosomal protein uL14 family.</text>
</comment>
<organism>
    <name type="scientific">Streptococcus pyogenes serotype M3 (strain SSI-1)</name>
    <dbReference type="NCBI Taxonomy" id="193567"/>
    <lineage>
        <taxon>Bacteria</taxon>
        <taxon>Bacillati</taxon>
        <taxon>Bacillota</taxon>
        <taxon>Bacilli</taxon>
        <taxon>Lactobacillales</taxon>
        <taxon>Streptococcaceae</taxon>
        <taxon>Streptococcus</taxon>
    </lineage>
</organism>
<keyword id="KW-0687">Ribonucleoprotein</keyword>
<keyword id="KW-0689">Ribosomal protein</keyword>
<keyword id="KW-0694">RNA-binding</keyword>
<keyword id="KW-0699">rRNA-binding</keyword>
<sequence>MIQQETRLKVADNSGAREILTIKVLGGSGRKFANIGDVIVASVKQATPGGAVKKGDVVKAVIVRTKTGARRPDGSYIKFDDNAAVIIRDDKTPRGTRIFGPVARELREGGYMKIVSLAPEVL</sequence>
<accession>P0DE05</accession>
<accession>Q79YR5</accession>
<accession>Q7CFL0</accession>
<reference key="1">
    <citation type="journal article" date="2003" name="Genome Res.">
        <title>Genome sequence of an M3 strain of Streptococcus pyogenes reveals a large-scale genomic rearrangement in invasive strains and new insights into phage evolution.</title>
        <authorList>
            <person name="Nakagawa I."/>
            <person name="Kurokawa K."/>
            <person name="Yamashita A."/>
            <person name="Nakata M."/>
            <person name="Tomiyasu Y."/>
            <person name="Okahashi N."/>
            <person name="Kawabata S."/>
            <person name="Yamazaki K."/>
            <person name="Shiba T."/>
            <person name="Yasunaga T."/>
            <person name="Hayashi H."/>
            <person name="Hattori M."/>
            <person name="Hamada S."/>
        </authorList>
    </citation>
    <scope>NUCLEOTIDE SEQUENCE [LARGE SCALE GENOMIC DNA]</scope>
    <source>
        <strain>SSI-1</strain>
    </source>
</reference>
<evidence type="ECO:0000255" key="1">
    <source>
        <dbReference type="HAMAP-Rule" id="MF_01367"/>
    </source>
</evidence>
<evidence type="ECO:0000305" key="2"/>
<gene>
    <name evidence="1" type="primary">rplN</name>
    <name type="ordered locus">SPs0052</name>
</gene>
<protein>
    <recommendedName>
        <fullName evidence="1">Large ribosomal subunit protein uL14</fullName>
    </recommendedName>
    <alternativeName>
        <fullName evidence="2">50S ribosomal protein L14</fullName>
    </alternativeName>
</protein>